<reference key="1">
    <citation type="journal article" date="1997" name="Oncogene">
        <title>The human growth factor-inducible immediate early gene, CYR61, maps to chromosome 1p.</title>
        <authorList>
            <person name="Jay P."/>
            <person name="Berge-Lefranc J.-L."/>
            <person name="Marsollier C."/>
            <person name="Mejean C."/>
            <person name="Taviaux S."/>
            <person name="Berta P."/>
        </authorList>
    </citation>
    <scope>NUCLEOTIDE SEQUENCE [MRNA]</scope>
</reference>
<reference key="2">
    <citation type="journal article" date="1997" name="Mol. Pathol.">
        <title>Chromosomal mapping and expression of the human cyr61 gene in tumour cells from the nervous system.</title>
        <authorList>
            <person name="Martinerie C."/>
            <person name="Viegas-Pequignot E."/>
            <person name="Nguyen V.C."/>
            <person name="Perbal B."/>
        </authorList>
    </citation>
    <scope>NUCLEOTIDE SEQUENCE [MRNA]</scope>
</reference>
<reference key="3">
    <citation type="journal article" date="2000" name="J. Biol. Chem.">
        <title>Muscarinic acetylcholine receptors induce the expression of the immediate early growth regulatory gene CYR61.</title>
        <authorList>
            <person name="Albrecht C."/>
            <person name="von Der Kammer H."/>
            <person name="Mayhaus M."/>
            <person name="Klaudiny J."/>
            <person name="Schweizer M."/>
            <person name="Nitsch R.M."/>
        </authorList>
    </citation>
    <scope>NUCLEOTIDE SEQUENCE [MRNA]</scope>
</reference>
<reference key="4">
    <citation type="submission" date="1997-06" db="EMBL/GenBank/DDBJ databases">
        <title>Human growth-factor inducible gene product CYR61, complete sequence.</title>
        <authorList>
            <person name="Kolesnikova T.V."/>
            <person name="Lau L.F."/>
        </authorList>
    </citation>
    <scope>NUCLEOTIDE SEQUENCE [MRNA]</scope>
    <source>
        <tissue>Placenta</tissue>
    </source>
</reference>
<reference key="5">
    <citation type="submission" date="1997-11" db="EMBL/GenBank/DDBJ databases">
        <title>Cloning of HumCyr61 gene expressing down-regulatedly in rhabdomyosarcoma.</title>
        <authorList>
            <person name="Bi A.B."/>
            <person name="Yu L."/>
        </authorList>
    </citation>
    <scope>NUCLEOTIDE SEQUENCE [MRNA]</scope>
</reference>
<reference key="6">
    <citation type="submission" date="1997-07" db="EMBL/GenBank/DDBJ databases">
        <title>Regulation of hCYR61 by vitamin D, serum and cytokines in fetal human osteoblasts.</title>
        <authorList>
            <person name="Schuetze N."/>
            <person name="Lechner A."/>
            <person name="Groll C."/>
            <person name="Koehrle J."/>
            <person name="Jakob F."/>
        </authorList>
    </citation>
    <scope>NUCLEOTIDE SEQUENCE [MRNA]</scope>
</reference>
<reference key="7">
    <citation type="journal article" date="2002" name="J. Biomed. Sci.">
        <title>Organization and expression of the Cyr61 gene in normal human fibroblasts.</title>
        <authorList>
            <person name="Leng E."/>
            <person name="Malcolm T."/>
            <person name="Tai G."/>
            <person name="Estable M."/>
            <person name="Sadowski I."/>
        </authorList>
    </citation>
    <scope>NUCLEOTIDE SEQUENCE [GENOMIC DNA]</scope>
</reference>
<reference key="8">
    <citation type="submission" date="2003-10" db="EMBL/GenBank/DDBJ databases">
        <authorList>
            <consortium name="NIEHS SNPs program"/>
        </authorList>
    </citation>
    <scope>NUCLEOTIDE SEQUENCE [GENOMIC DNA]</scope>
    <scope>VARIANT TRP-334</scope>
</reference>
<reference key="9">
    <citation type="journal article" date="2004" name="Genome Res.">
        <title>The status, quality, and expansion of the NIH full-length cDNA project: the Mammalian Gene Collection (MGC).</title>
        <authorList>
            <consortium name="The MGC Project Team"/>
        </authorList>
    </citation>
    <scope>NUCLEOTIDE SEQUENCE [LARGE SCALE MRNA]</scope>
    <source>
        <tissue>Lung</tissue>
        <tissue>Placenta</tissue>
        <tissue>Skin</tissue>
    </source>
</reference>
<reference key="10">
    <citation type="journal article" date="2001" name="J. Biol. Chem.">
        <title>The angiogenic factor Cyr61 activates a genetic program for wound healing in human skin fibroblasts.</title>
        <authorList>
            <person name="Chen C.-C."/>
            <person name="Mo F.-E."/>
            <person name="Lau L.F."/>
        </authorList>
    </citation>
    <scope>FUNCTION IN WOUND HEALING</scope>
</reference>
<reference key="11">
    <citation type="journal article" date="1998" name="J. Biol. Chem.">
        <title>Adhesion of human umbilical vein endothelial cells to the immediate-early gene product Cyr61 is mediated through integrin alphavbeta3.</title>
        <authorList>
            <person name="Kireeva M.L."/>
            <person name="Lam S.C."/>
            <person name="Lau L.F."/>
        </authorList>
    </citation>
    <scope>INTERACTION WITH INTEGRIN ALPHA-V/BETA-3</scope>
</reference>
<reference key="12">
    <citation type="journal article" date="1999" name="J. Biol. Chem.">
        <title>Activation-dependent adhesion of human platelets to Cyr61 and Fisp12/mouse connective tissue growth factor is mediated through integrin alpha(IIb)beta(3).</title>
        <authorList>
            <person name="Jedsadayanmata A."/>
            <person name="Chen C.-C."/>
            <person name="Kireeva M.L."/>
            <person name="Lau L.F."/>
            <person name="Lam S.C."/>
        </authorList>
    </citation>
    <scope>INTERACTION WITH INTEGRIN ALPHA-IIB/BETA-3</scope>
</reference>
<reference key="13">
    <citation type="journal article" date="2000" name="J. Biol. Chem.">
        <title>Adhesion of human skin fibroblasts to Cyr61 is mediated through integrin alpha 6beta 1 and cell surface heparan sulfate proteoglycans.</title>
        <authorList>
            <person name="Chen N."/>
            <person name="Chen C.-C."/>
            <person name="Lau L.F."/>
        </authorList>
    </citation>
    <scope>INTERACTION WITH INTEGRIN ALPHA-6/BETA-1</scope>
</reference>
<reference key="14">
    <citation type="journal article" date="2001" name="J. Biol. Chem.">
        <title>CYR61 stimulates human skin fibroblast migration through Integrin alpha vbeta 5 and enhances mitogenesis through integrin alpha vbeta 3, independent of its carboxyl-terminal domain.</title>
        <authorList>
            <person name="Grzeszkiewicz T.M."/>
            <person name="Kirschling D.J."/>
            <person name="Chen N."/>
            <person name="Lau L.F."/>
        </authorList>
    </citation>
    <scope>INTERACTION WITH INTEGRIN ALPHA-V/BETA-6</scope>
</reference>
<reference key="15">
    <citation type="journal article" date="2015" name="Cell">
        <title>A single kinase generates the majority of the secreted phosphoproteome.</title>
        <authorList>
            <person name="Tagliabracci V.S."/>
            <person name="Wiley S.E."/>
            <person name="Guo X."/>
            <person name="Kinch L.N."/>
            <person name="Durrant E."/>
            <person name="Wen J."/>
            <person name="Xiao J."/>
            <person name="Cui J."/>
            <person name="Nguyen K.B."/>
            <person name="Engel J.L."/>
            <person name="Coon J.J."/>
            <person name="Grishin N."/>
            <person name="Pinna L.A."/>
            <person name="Pagliarini D.J."/>
            <person name="Dixon J.E."/>
        </authorList>
    </citation>
    <scope>PHOSPHORYLATION AT SER-188</scope>
</reference>
<keyword id="KW-0002">3D-structure</keyword>
<keyword id="KW-0130">Cell adhesion</keyword>
<keyword id="KW-0145">Chemotaxis</keyword>
<keyword id="KW-1015">Disulfide bond</keyword>
<keyword id="KW-0340">Growth factor binding</keyword>
<keyword id="KW-0358">Heparin-binding</keyword>
<keyword id="KW-0597">Phosphoprotein</keyword>
<keyword id="KW-1267">Proteomics identification</keyword>
<keyword id="KW-1185">Reference proteome</keyword>
<keyword id="KW-0964">Secreted</keyword>
<keyword id="KW-0732">Signal</keyword>
<accession>O00622</accession>
<accession>O14934</accession>
<accession>O43775</accession>
<accession>Q9BZL7</accession>
<gene>
    <name evidence="17" type="primary">CCN1</name>
    <name evidence="15" type="synonym">CYR61</name>
    <name type="synonym">GIG1</name>
    <name type="synonym">IGFBP10</name>
</gene>
<comment type="function">
    <text evidence="11">Promotes cell proliferation, chemotaxis, angiogenesis and cell adhesion. Appears to play a role in wound healing by up-regulating, in skin fibroblasts, the expression of a number of genes involved in angiogenesis, inflammation and matrix remodeling including VEGA-A, VEGA-C, MMP1, MMP3, TIMP1, uPA, PAI-1 and integrins alpha-3 and alpha-5. CCN1-mediated gene regulation is dependent on heparin-binding. Down-regulates the expression of alpha-1 and alpha-2 subunits of collagen type-1. Promotes cell adhesion and adhesive signaling through integrin alpha-6/beta-1, cell migration through integrin alpha-v/beta-5 and cell proliferation through integrin alpha-v/beta-3.</text>
</comment>
<comment type="subunit">
    <text evidence="8 9 10 13">Interaction with integrins is heparin- and cell-type-dependent and promotes cell adhesion. In skin fibroblasts it binds ITGA6/ITGB1, in endothelial cells, binds ITGAV/ITGB3 and in platelets, ITGA2B/ITGB3. Binds, in vitro, ITGAV/ITGB5.</text>
</comment>
<comment type="interaction">
    <interactant intactId="EBI-1237454">
        <id>O00622</id>
    </interactant>
    <interactant intactId="EBI-12828299">
        <id>O60906</id>
        <label>SMPD2</label>
    </interactant>
    <organismsDiffer>false</organismsDiffer>
    <experiments>3</experiments>
</comment>
<comment type="interaction">
    <interactant intactId="EBI-1237454">
        <id>O00622</id>
    </interactant>
    <interactant intactId="EBI-947187">
        <id>Q9UHD9</id>
        <label>UBQLN2</label>
    </interactant>
    <organismsDiffer>false</organismsDiffer>
    <experiments>3</experiments>
</comment>
<comment type="subcellular location">
    <subcellularLocation>
        <location>Secreted</location>
    </subcellularLocation>
</comment>
<comment type="similarity">
    <text evidence="16">Belongs to the CCN family.</text>
</comment>
<sequence length="381" mass="42027">MSSRIARALALVVTLLHLTRLALSTCPAACHCPLEAPKCAPGVGLVRDGCGCCKVCAKQLNEDCSKTQPCDHTKGLECNFGASSTALKGICRAQSEGRPCEYNSRIYQNGESFQPNCKHQCTCIDGAVGCIPLCPQELSLPNLGCPNPRLVKVTGQCCEEWVCDEDSIKDPMEDQDGLLGKELGFDASEVELTRNNELIAVGKGSSLKRLPVFGMEPRILYNPLQGQKCIVQTTSWSQCSKTCGTGISTRVTNDNPECRLVKETRICEVRPCGQPVYSSLKKGKKCSKTKKSPEPVRFTYAGCLSVKKYRPKYCGSCVDGRCCTPQLTRTVKMRFRCEDGETFSKNVMMIQSCKCNYNCPHANEAAFPFYRLFNDIHKFRD</sequence>
<protein>
    <recommendedName>
        <fullName evidence="16">CCN family member 1</fullName>
    </recommendedName>
    <alternativeName>
        <fullName evidence="17">Cellular communication network factor 1</fullName>
    </alternativeName>
    <alternativeName>
        <fullName>Cysteine-rich angiogenic inducer 61</fullName>
    </alternativeName>
    <alternativeName>
        <fullName>Insulin-like growth factor-binding protein 10</fullName>
        <shortName>IBP-10</shortName>
        <shortName>IGF-binding protein 10</shortName>
        <shortName>IGFBP-10</shortName>
    </alternativeName>
    <alternativeName>
        <fullName>Protein CYR61</fullName>
    </alternativeName>
    <alternativeName>
        <fullName>Protein GIG1</fullName>
    </alternativeName>
</protein>
<proteinExistence type="evidence at protein level"/>
<organism>
    <name type="scientific">Homo sapiens</name>
    <name type="common">Human</name>
    <dbReference type="NCBI Taxonomy" id="9606"/>
    <lineage>
        <taxon>Eukaryota</taxon>
        <taxon>Metazoa</taxon>
        <taxon>Chordata</taxon>
        <taxon>Craniata</taxon>
        <taxon>Vertebrata</taxon>
        <taxon>Euteleostomi</taxon>
        <taxon>Mammalia</taxon>
        <taxon>Eutheria</taxon>
        <taxon>Euarchontoglires</taxon>
        <taxon>Primates</taxon>
        <taxon>Haplorrhini</taxon>
        <taxon>Catarrhini</taxon>
        <taxon>Hominidae</taxon>
        <taxon>Homo</taxon>
    </lineage>
</organism>
<feature type="signal peptide" evidence="3">
    <location>
        <begin position="1"/>
        <end position="24"/>
    </location>
</feature>
<feature type="chain" id="PRO_0000014398" description="CCN family member 1">
    <location>
        <begin position="25"/>
        <end position="381"/>
    </location>
</feature>
<feature type="domain" description="IGFBP N-terminal" evidence="7">
    <location>
        <begin position="25"/>
        <end position="94"/>
    </location>
</feature>
<feature type="domain" description="VWFC" evidence="6">
    <location>
        <begin position="98"/>
        <end position="164"/>
    </location>
</feature>
<feature type="domain" description="TSP type-1" evidence="5">
    <location>
        <begin position="228"/>
        <end position="273"/>
    </location>
</feature>
<feature type="domain" description="CTCK" evidence="4">
    <location>
        <begin position="286"/>
        <end position="360"/>
    </location>
</feature>
<feature type="region of interest" description="Heparin-binding" evidence="2">
    <location>
        <begin position="279"/>
        <end position="315"/>
    </location>
</feature>
<feature type="modified residue" description="Phosphoserine; by FAM20C" evidence="12">
    <location>
        <position position="188"/>
    </location>
</feature>
<feature type="disulfide bond" evidence="7">
    <location>
        <begin position="26"/>
        <end position="50"/>
    </location>
</feature>
<feature type="disulfide bond" evidence="7">
    <location>
        <begin position="30"/>
        <end position="52"/>
    </location>
</feature>
<feature type="disulfide bond" evidence="7">
    <location>
        <begin position="32"/>
        <end position="53"/>
    </location>
</feature>
<feature type="disulfide bond" evidence="7">
    <location>
        <begin position="39"/>
        <end position="56"/>
    </location>
</feature>
<feature type="disulfide bond" evidence="7">
    <location>
        <begin position="64"/>
        <end position="78"/>
    </location>
</feature>
<feature type="disulfide bond" evidence="7">
    <location>
        <begin position="70"/>
        <end position="91"/>
    </location>
</feature>
<feature type="disulfide bond" evidence="1">
    <location>
        <begin position="286"/>
        <end position="323"/>
    </location>
</feature>
<feature type="disulfide bond" evidence="1">
    <location>
        <begin position="303"/>
        <end position="337"/>
    </location>
</feature>
<feature type="disulfide bond" evidence="1">
    <location>
        <begin position="314"/>
        <end position="353"/>
    </location>
</feature>
<feature type="disulfide bond" evidence="1">
    <location>
        <begin position="317"/>
        <end position="355"/>
    </location>
</feature>
<feature type="disulfide bond" evidence="1">
    <location>
        <begin position="322"/>
        <end position="359"/>
    </location>
</feature>
<feature type="sequence variant" id="VAR_018934" description="In dbSNP:rs9658587." evidence="14">
    <original>R</original>
    <variation>W</variation>
    <location>
        <position position="334"/>
    </location>
</feature>
<feature type="sequence conflict" description="In Ref. 2; CAA72167." evidence="16" ref="2">
    <original>E</original>
    <variation>Q</variation>
    <location>
        <position position="165"/>
    </location>
</feature>
<feature type="sequence conflict" description="In Ref. 5; AAB84227." evidence="16" ref="5">
    <original>L</original>
    <variation>I</variation>
    <location>
        <position position="210"/>
    </location>
</feature>
<feature type="sequence conflict" description="In Ref. 5; AAB84227." evidence="16" ref="5">
    <original>L</original>
    <variation>R</variation>
    <location>
        <position position="220"/>
    </location>
</feature>
<feature type="sequence conflict" description="In Ref. 7; AAG59863." evidence="16" ref="7">
    <original>F</original>
    <variation>L</variation>
    <location>
        <position position="369"/>
    </location>
</feature>
<evidence type="ECO:0000250" key="1"/>
<evidence type="ECO:0000250" key="2">
    <source>
        <dbReference type="UniProtKB" id="P18406"/>
    </source>
</evidence>
<evidence type="ECO:0000255" key="3"/>
<evidence type="ECO:0000255" key="4">
    <source>
        <dbReference type="PROSITE-ProRule" id="PRU00039"/>
    </source>
</evidence>
<evidence type="ECO:0000255" key="5">
    <source>
        <dbReference type="PROSITE-ProRule" id="PRU00210"/>
    </source>
</evidence>
<evidence type="ECO:0000255" key="6">
    <source>
        <dbReference type="PROSITE-ProRule" id="PRU00220"/>
    </source>
</evidence>
<evidence type="ECO:0000255" key="7">
    <source>
        <dbReference type="PROSITE-ProRule" id="PRU00653"/>
    </source>
</evidence>
<evidence type="ECO:0000269" key="8">
    <source>
    </source>
</evidence>
<evidence type="ECO:0000269" key="9">
    <source>
    </source>
</evidence>
<evidence type="ECO:0000269" key="10">
    <source>
    </source>
</evidence>
<evidence type="ECO:0000269" key="11">
    <source>
    </source>
</evidence>
<evidence type="ECO:0000269" key="12">
    <source>
    </source>
</evidence>
<evidence type="ECO:0000269" key="13">
    <source>
    </source>
</evidence>
<evidence type="ECO:0000269" key="14">
    <source ref="8"/>
</evidence>
<evidence type="ECO:0000303" key="15">
    <source>
    </source>
</evidence>
<evidence type="ECO:0000305" key="16"/>
<evidence type="ECO:0000312" key="17">
    <source>
        <dbReference type="HGNC" id="HGNC:2654"/>
    </source>
</evidence>
<name>CCN1_HUMAN</name>
<dbReference type="EMBL" id="U62015">
    <property type="protein sequence ID" value="AAB58319.1"/>
    <property type="molecule type" value="mRNA"/>
</dbReference>
<dbReference type="EMBL" id="Y11307">
    <property type="protein sequence ID" value="CAA72167.1"/>
    <property type="molecule type" value="mRNA"/>
</dbReference>
<dbReference type="EMBL" id="Y12084">
    <property type="protein sequence ID" value="CAA72802.1"/>
    <property type="molecule type" value="mRNA"/>
</dbReference>
<dbReference type="EMBL" id="AF003594">
    <property type="protein sequence ID" value="AAB61240.1"/>
    <property type="molecule type" value="mRNA"/>
</dbReference>
<dbReference type="EMBL" id="AF031385">
    <property type="protein sequence ID" value="AAB84227.1"/>
    <property type="molecule type" value="mRNA"/>
</dbReference>
<dbReference type="EMBL" id="Z98053">
    <property type="protein sequence ID" value="CAB10848.1"/>
    <property type="molecule type" value="mRNA"/>
</dbReference>
<dbReference type="EMBL" id="AF307860">
    <property type="protein sequence ID" value="AAG59863.1"/>
    <property type="molecule type" value="Genomic_DNA"/>
</dbReference>
<dbReference type="EMBL" id="AY443495">
    <property type="protein sequence ID" value="AAR05446.1"/>
    <property type="molecule type" value="Genomic_DNA"/>
</dbReference>
<dbReference type="EMBL" id="BC001271">
    <property type="protein sequence ID" value="AAH01271.1"/>
    <property type="molecule type" value="mRNA"/>
</dbReference>
<dbReference type="EMBL" id="BC009199">
    <property type="protein sequence ID" value="AAH09199.1"/>
    <property type="molecule type" value="mRNA"/>
</dbReference>
<dbReference type="EMBL" id="BC016952">
    <property type="protein sequence ID" value="AAH16952.1"/>
    <property type="molecule type" value="mRNA"/>
</dbReference>
<dbReference type="CCDS" id="CCDS706.1"/>
<dbReference type="RefSeq" id="NP_001545.2">
    <property type="nucleotide sequence ID" value="NM_001554.4"/>
</dbReference>
<dbReference type="PDB" id="4D0Z">
    <property type="method" value="X-ray"/>
    <property type="resolution" value="2.20 A"/>
    <property type="chains" value="X/Y=24-29"/>
</dbReference>
<dbReference type="PDB" id="4D11">
    <property type="method" value="X-ray"/>
    <property type="resolution" value="2.85 A"/>
    <property type="chains" value="L/O/P/X/Z=24-29"/>
</dbReference>
<dbReference type="PDBsum" id="4D0Z"/>
<dbReference type="PDBsum" id="4D11"/>
<dbReference type="SMR" id="O00622"/>
<dbReference type="BioGRID" id="109712">
    <property type="interactions" value="47"/>
</dbReference>
<dbReference type="CORUM" id="O00622"/>
<dbReference type="FunCoup" id="O00622">
    <property type="interactions" value="211"/>
</dbReference>
<dbReference type="IntAct" id="O00622">
    <property type="interactions" value="18"/>
</dbReference>
<dbReference type="MINT" id="O00622"/>
<dbReference type="STRING" id="9606.ENSP00000398736"/>
<dbReference type="GlyGen" id="O00622">
    <property type="glycosylation" value="3 sites, 1 O-linked glycan (1 site)"/>
</dbReference>
<dbReference type="iPTMnet" id="O00622"/>
<dbReference type="PhosphoSitePlus" id="O00622"/>
<dbReference type="BioMuta" id="CYR61"/>
<dbReference type="jPOST" id="O00622"/>
<dbReference type="MassIVE" id="O00622"/>
<dbReference type="PaxDb" id="9606-ENSP00000398736"/>
<dbReference type="PeptideAtlas" id="O00622"/>
<dbReference type="ProteomicsDB" id="47995"/>
<dbReference type="Pumba" id="O00622"/>
<dbReference type="ABCD" id="O00622">
    <property type="antibodies" value="1 sequenced antibody"/>
</dbReference>
<dbReference type="Antibodypedia" id="19796">
    <property type="antibodies" value="600 antibodies from 38 providers"/>
</dbReference>
<dbReference type="DNASU" id="3491"/>
<dbReference type="Ensembl" id="ENST00000451137.7">
    <property type="protein sequence ID" value="ENSP00000398736.2"/>
    <property type="gene ID" value="ENSG00000142871.18"/>
</dbReference>
<dbReference type="GeneID" id="3491"/>
<dbReference type="KEGG" id="hsa:3491"/>
<dbReference type="MANE-Select" id="ENST00000451137.7">
    <property type="protein sequence ID" value="ENSP00000398736.2"/>
    <property type="RefSeq nucleotide sequence ID" value="NM_001554.5"/>
    <property type="RefSeq protein sequence ID" value="NP_001545.2"/>
</dbReference>
<dbReference type="AGR" id="HGNC:2654"/>
<dbReference type="CTD" id="3491"/>
<dbReference type="DisGeNET" id="3491"/>
<dbReference type="GeneCards" id="CCN1"/>
<dbReference type="HGNC" id="HGNC:2654">
    <property type="gene designation" value="CCN1"/>
</dbReference>
<dbReference type="HPA" id="ENSG00000142871">
    <property type="expression patterns" value="Low tissue specificity"/>
</dbReference>
<dbReference type="MIM" id="602369">
    <property type="type" value="gene"/>
</dbReference>
<dbReference type="neXtProt" id="NX_O00622"/>
<dbReference type="OpenTargets" id="ENSG00000142871"/>
<dbReference type="PharmGKB" id="PA27126"/>
<dbReference type="VEuPathDB" id="HostDB:ENSG00000142871"/>
<dbReference type="eggNOG" id="ENOG502QQQQ">
    <property type="taxonomic scope" value="Eukaryota"/>
</dbReference>
<dbReference type="GeneTree" id="ENSGT00940000155151"/>
<dbReference type="HOGENOM" id="CLU_063247_1_0_1"/>
<dbReference type="InParanoid" id="O00622"/>
<dbReference type="OMA" id="HCDDGET"/>
<dbReference type="OrthoDB" id="365605at2759"/>
<dbReference type="PAN-GO" id="O00622">
    <property type="GO annotations" value="6 GO annotations based on evolutionary models"/>
</dbReference>
<dbReference type="PhylomeDB" id="O00622"/>
<dbReference type="TreeFam" id="TF326070"/>
<dbReference type="PathwayCommons" id="O00622"/>
<dbReference type="Reactome" id="R-HSA-381426">
    <property type="pathway name" value="Regulation of Insulin-like Growth Factor (IGF) transport and uptake by Insulin-like Growth Factor Binding Proteins (IGFBPs)"/>
</dbReference>
<dbReference type="Reactome" id="R-HSA-8957275">
    <property type="pathway name" value="Post-translational protein phosphorylation"/>
</dbReference>
<dbReference type="SignaLink" id="O00622"/>
<dbReference type="BioGRID-ORCS" id="3491">
    <property type="hits" value="11 hits in 1161 CRISPR screens"/>
</dbReference>
<dbReference type="ChiTaRS" id="CYR61">
    <property type="organism name" value="human"/>
</dbReference>
<dbReference type="GeneWiki" id="CYR61"/>
<dbReference type="GenomeRNAi" id="3491"/>
<dbReference type="Pharos" id="O00622">
    <property type="development level" value="Tbio"/>
</dbReference>
<dbReference type="PRO" id="PR:O00622"/>
<dbReference type="Proteomes" id="UP000005640">
    <property type="component" value="Chromosome 1"/>
</dbReference>
<dbReference type="RNAct" id="O00622">
    <property type="molecule type" value="protein"/>
</dbReference>
<dbReference type="Bgee" id="ENSG00000142871">
    <property type="expression patterns" value="Expressed in left uterine tube and 206 other cell types or tissues"/>
</dbReference>
<dbReference type="ExpressionAtlas" id="O00622">
    <property type="expression patterns" value="baseline and differential"/>
</dbReference>
<dbReference type="GO" id="GO:0062023">
    <property type="term" value="C:collagen-containing extracellular matrix"/>
    <property type="evidence" value="ECO:0007005"/>
    <property type="project" value="UniProtKB"/>
</dbReference>
<dbReference type="GO" id="GO:0005788">
    <property type="term" value="C:endoplasmic reticulum lumen"/>
    <property type="evidence" value="ECO:0000304"/>
    <property type="project" value="Reactome"/>
</dbReference>
<dbReference type="GO" id="GO:0031012">
    <property type="term" value="C:extracellular matrix"/>
    <property type="evidence" value="ECO:0000318"/>
    <property type="project" value="GO_Central"/>
</dbReference>
<dbReference type="GO" id="GO:0005615">
    <property type="term" value="C:extracellular space"/>
    <property type="evidence" value="ECO:0000318"/>
    <property type="project" value="GO_Central"/>
</dbReference>
<dbReference type="GO" id="GO:0050840">
    <property type="term" value="F:extracellular matrix binding"/>
    <property type="evidence" value="ECO:0007669"/>
    <property type="project" value="Ensembl"/>
</dbReference>
<dbReference type="GO" id="GO:0019838">
    <property type="term" value="F:growth factor binding"/>
    <property type="evidence" value="ECO:0007669"/>
    <property type="project" value="UniProtKB-KW"/>
</dbReference>
<dbReference type="GO" id="GO:0008201">
    <property type="term" value="F:heparin binding"/>
    <property type="evidence" value="ECO:0000318"/>
    <property type="project" value="GO_Central"/>
</dbReference>
<dbReference type="GO" id="GO:0005178">
    <property type="term" value="F:integrin binding"/>
    <property type="evidence" value="ECO:0000318"/>
    <property type="project" value="GO_Central"/>
</dbReference>
<dbReference type="GO" id="GO:0003278">
    <property type="term" value="P:apoptotic process involved in heart morphogenesis"/>
    <property type="evidence" value="ECO:0007669"/>
    <property type="project" value="Ensembl"/>
</dbReference>
<dbReference type="GO" id="GO:0060413">
    <property type="term" value="P:atrial septum morphogenesis"/>
    <property type="evidence" value="ECO:0007669"/>
    <property type="project" value="Ensembl"/>
</dbReference>
<dbReference type="GO" id="GO:0003181">
    <property type="term" value="P:atrioventricular valve morphogenesis"/>
    <property type="evidence" value="ECO:0007669"/>
    <property type="project" value="Ensembl"/>
</dbReference>
<dbReference type="GO" id="GO:0007155">
    <property type="term" value="P:cell adhesion"/>
    <property type="evidence" value="ECO:0000318"/>
    <property type="project" value="GO_Central"/>
</dbReference>
<dbReference type="GO" id="GO:0006935">
    <property type="term" value="P:chemotaxis"/>
    <property type="evidence" value="ECO:0007669"/>
    <property type="project" value="UniProtKB-KW"/>
</dbReference>
<dbReference type="GO" id="GO:0060591">
    <property type="term" value="P:chondroblast differentiation"/>
    <property type="evidence" value="ECO:0007669"/>
    <property type="project" value="Ensembl"/>
</dbReference>
<dbReference type="GO" id="GO:0060710">
    <property type="term" value="P:chorio-allantoic fusion"/>
    <property type="evidence" value="ECO:0007669"/>
    <property type="project" value="Ensembl"/>
</dbReference>
<dbReference type="GO" id="GO:0030198">
    <property type="term" value="P:extracellular matrix organization"/>
    <property type="evidence" value="ECO:0007669"/>
    <property type="project" value="Ensembl"/>
</dbReference>
<dbReference type="GO" id="GO:0007229">
    <property type="term" value="P:integrin-mediated signaling pathway"/>
    <property type="evidence" value="ECO:0000314"/>
    <property type="project" value="BHF-UCL"/>
</dbReference>
<dbReference type="GO" id="GO:0002041">
    <property type="term" value="P:intussusceptive angiogenesis"/>
    <property type="evidence" value="ECO:0007669"/>
    <property type="project" value="Ensembl"/>
</dbReference>
<dbReference type="GO" id="GO:0060716">
    <property type="term" value="P:labyrinthine layer blood vessel development"/>
    <property type="evidence" value="ECO:0007669"/>
    <property type="project" value="Ensembl"/>
</dbReference>
<dbReference type="GO" id="GO:0043066">
    <property type="term" value="P:negative regulation of apoptotic process"/>
    <property type="evidence" value="ECO:0007669"/>
    <property type="project" value="Ensembl"/>
</dbReference>
<dbReference type="GO" id="GO:0001649">
    <property type="term" value="P:osteoblast differentiation"/>
    <property type="evidence" value="ECO:0007669"/>
    <property type="project" value="Ensembl"/>
</dbReference>
<dbReference type="GO" id="GO:0043065">
    <property type="term" value="P:positive regulation of apoptotic process"/>
    <property type="evidence" value="ECO:0007669"/>
    <property type="project" value="Ensembl"/>
</dbReference>
<dbReference type="GO" id="GO:0030513">
    <property type="term" value="P:positive regulation of BMP signaling pathway"/>
    <property type="evidence" value="ECO:0000316"/>
    <property type="project" value="BHF-UCL"/>
</dbReference>
<dbReference type="GO" id="GO:0030501">
    <property type="term" value="P:positive regulation of bone mineralization"/>
    <property type="evidence" value="ECO:0000314"/>
    <property type="project" value="BHF-UCL"/>
</dbReference>
<dbReference type="GO" id="GO:0061036">
    <property type="term" value="P:positive regulation of cartilage development"/>
    <property type="evidence" value="ECO:0007669"/>
    <property type="project" value="Ensembl"/>
</dbReference>
<dbReference type="GO" id="GO:0045597">
    <property type="term" value="P:positive regulation of cell differentiation"/>
    <property type="evidence" value="ECO:0000318"/>
    <property type="project" value="GO_Central"/>
</dbReference>
<dbReference type="GO" id="GO:0030335">
    <property type="term" value="P:positive regulation of cell migration"/>
    <property type="evidence" value="ECO:0000314"/>
    <property type="project" value="BHF-UCL"/>
</dbReference>
<dbReference type="GO" id="GO:0010811">
    <property type="term" value="P:positive regulation of cell-substrate adhesion"/>
    <property type="evidence" value="ECO:0007669"/>
    <property type="project" value="Ensembl"/>
</dbReference>
<dbReference type="GO" id="GO:2000304">
    <property type="term" value="P:positive regulation of ceramide biosynthetic process"/>
    <property type="evidence" value="ECO:0007669"/>
    <property type="project" value="Ensembl"/>
</dbReference>
<dbReference type="GO" id="GO:0045669">
    <property type="term" value="P:positive regulation of osteoblast differentiation"/>
    <property type="evidence" value="ECO:0000314"/>
    <property type="project" value="BHF-UCL"/>
</dbReference>
<dbReference type="GO" id="GO:0033690">
    <property type="term" value="P:positive regulation of osteoblast proliferation"/>
    <property type="evidence" value="ECO:0000314"/>
    <property type="project" value="BHF-UCL"/>
</dbReference>
<dbReference type="GO" id="GO:0045944">
    <property type="term" value="P:positive regulation of transcription by RNA polymerase II"/>
    <property type="evidence" value="ECO:0000314"/>
    <property type="project" value="BHF-UCL"/>
</dbReference>
<dbReference type="GO" id="GO:0072593">
    <property type="term" value="P:reactive oxygen species metabolic process"/>
    <property type="evidence" value="ECO:0007669"/>
    <property type="project" value="Ensembl"/>
</dbReference>
<dbReference type="GO" id="GO:0070372">
    <property type="term" value="P:regulation of ERK1 and ERK2 cascade"/>
    <property type="evidence" value="ECO:0000314"/>
    <property type="project" value="BHF-UCL"/>
</dbReference>
<dbReference type="GO" id="GO:0007165">
    <property type="term" value="P:signal transduction"/>
    <property type="evidence" value="ECO:0000318"/>
    <property type="project" value="GO_Central"/>
</dbReference>
<dbReference type="GO" id="GO:0003281">
    <property type="term" value="P:ventricular septum development"/>
    <property type="evidence" value="ECO:0007669"/>
    <property type="project" value="Ensembl"/>
</dbReference>
<dbReference type="FunFam" id="2.10.70.10:FF:000015">
    <property type="entry name" value="CYR61 isoform 1"/>
    <property type="match status" value="1"/>
</dbReference>
<dbReference type="FunFam" id="2.20.100.10:FF:000038">
    <property type="entry name" value="CYR61 isoform 1"/>
    <property type="match status" value="1"/>
</dbReference>
<dbReference type="Gene3D" id="2.10.70.10">
    <property type="entry name" value="Complement Module, domain 1"/>
    <property type="match status" value="1"/>
</dbReference>
<dbReference type="Gene3D" id="2.20.100.10">
    <property type="entry name" value="Thrombospondin type-1 (TSP1) repeat"/>
    <property type="match status" value="1"/>
</dbReference>
<dbReference type="InterPro" id="IPR050941">
    <property type="entry name" value="CCN"/>
</dbReference>
<dbReference type="InterPro" id="IPR006207">
    <property type="entry name" value="Cys_knot_C"/>
</dbReference>
<dbReference type="InterPro" id="IPR006208">
    <property type="entry name" value="Glyco_hormone_CN"/>
</dbReference>
<dbReference type="InterPro" id="IPR009030">
    <property type="entry name" value="Growth_fac_rcpt_cys_sf"/>
</dbReference>
<dbReference type="InterPro" id="IPR000867">
    <property type="entry name" value="IGFBP-like"/>
</dbReference>
<dbReference type="InterPro" id="IPR012395">
    <property type="entry name" value="IGFBP_CNN"/>
</dbReference>
<dbReference type="InterPro" id="IPR017891">
    <property type="entry name" value="Insulin_GF-bd_Cys-rich_CS"/>
</dbReference>
<dbReference type="InterPro" id="IPR043973">
    <property type="entry name" value="TSP1_CCN"/>
</dbReference>
<dbReference type="InterPro" id="IPR000884">
    <property type="entry name" value="TSP1_rpt"/>
</dbReference>
<dbReference type="InterPro" id="IPR036383">
    <property type="entry name" value="TSP1_rpt_sf"/>
</dbReference>
<dbReference type="InterPro" id="IPR001007">
    <property type="entry name" value="VWF_dom"/>
</dbReference>
<dbReference type="PANTHER" id="PTHR11348:SF18">
    <property type="entry name" value="CCN FAMILY MEMBER 1"/>
    <property type="match status" value="1"/>
</dbReference>
<dbReference type="PANTHER" id="PTHR11348">
    <property type="entry name" value="CONNECTIVE TISSUE GROWTH FACTOR-RELATED"/>
    <property type="match status" value="1"/>
</dbReference>
<dbReference type="Pfam" id="PF00007">
    <property type="entry name" value="Cys_knot"/>
    <property type="match status" value="1"/>
</dbReference>
<dbReference type="Pfam" id="PF00219">
    <property type="entry name" value="IGFBP"/>
    <property type="match status" value="1"/>
</dbReference>
<dbReference type="Pfam" id="PF19035">
    <property type="entry name" value="TSP1_CCN"/>
    <property type="match status" value="1"/>
</dbReference>
<dbReference type="Pfam" id="PF00093">
    <property type="entry name" value="VWC"/>
    <property type="match status" value="1"/>
</dbReference>
<dbReference type="PIRSF" id="PIRSF036495">
    <property type="entry name" value="IGFBP_rP_CNN"/>
    <property type="match status" value="1"/>
</dbReference>
<dbReference type="SMART" id="SM00041">
    <property type="entry name" value="CT"/>
    <property type="match status" value="1"/>
</dbReference>
<dbReference type="SMART" id="SM00121">
    <property type="entry name" value="IB"/>
    <property type="match status" value="1"/>
</dbReference>
<dbReference type="SMART" id="SM00209">
    <property type="entry name" value="TSP1"/>
    <property type="match status" value="1"/>
</dbReference>
<dbReference type="SMART" id="SM00214">
    <property type="entry name" value="VWC"/>
    <property type="match status" value="1"/>
</dbReference>
<dbReference type="SUPFAM" id="SSF57603">
    <property type="entry name" value="FnI-like domain"/>
    <property type="match status" value="1"/>
</dbReference>
<dbReference type="SUPFAM" id="SSF57184">
    <property type="entry name" value="Growth factor receptor domain"/>
    <property type="match status" value="1"/>
</dbReference>
<dbReference type="SUPFAM" id="SSF82895">
    <property type="entry name" value="TSP-1 type 1 repeat"/>
    <property type="match status" value="1"/>
</dbReference>
<dbReference type="PROSITE" id="PS01185">
    <property type="entry name" value="CTCK_1"/>
    <property type="match status" value="1"/>
</dbReference>
<dbReference type="PROSITE" id="PS01225">
    <property type="entry name" value="CTCK_2"/>
    <property type="match status" value="1"/>
</dbReference>
<dbReference type="PROSITE" id="PS00222">
    <property type="entry name" value="IGFBP_N_1"/>
    <property type="match status" value="1"/>
</dbReference>
<dbReference type="PROSITE" id="PS51323">
    <property type="entry name" value="IGFBP_N_2"/>
    <property type="match status" value="1"/>
</dbReference>
<dbReference type="PROSITE" id="PS50092">
    <property type="entry name" value="TSP1"/>
    <property type="match status" value="1"/>
</dbReference>
<dbReference type="PROSITE" id="PS01208">
    <property type="entry name" value="VWFC_1"/>
    <property type="match status" value="1"/>
</dbReference>
<dbReference type="PROSITE" id="PS50184">
    <property type="entry name" value="VWFC_2"/>
    <property type="match status" value="1"/>
</dbReference>